<comment type="similarity">
    <text evidence="1">Belongs to the bacterial ribosomal protein bL33 family.</text>
</comment>
<proteinExistence type="inferred from homology"/>
<evidence type="ECO:0000255" key="1">
    <source>
        <dbReference type="HAMAP-Rule" id="MF_00294"/>
    </source>
</evidence>
<evidence type="ECO:0000305" key="2"/>
<sequence>MAKGKENRIVITLECTEAKKEGKTVSRYSTTKNKKNTTDRLVLKKYNPNLQRHTLHKEIK</sequence>
<accession>Q3B373</accession>
<gene>
    <name evidence="1" type="primary">rpmG</name>
    <name type="ordered locus">Plut_1349</name>
</gene>
<keyword id="KW-1185">Reference proteome</keyword>
<keyword id="KW-0687">Ribonucleoprotein</keyword>
<keyword id="KW-0689">Ribosomal protein</keyword>
<name>RL33_CHLL3</name>
<organism>
    <name type="scientific">Chlorobium luteolum (strain DSM 273 / BCRC 81028 / 2530)</name>
    <name type="common">Pelodictyon luteolum</name>
    <dbReference type="NCBI Taxonomy" id="319225"/>
    <lineage>
        <taxon>Bacteria</taxon>
        <taxon>Pseudomonadati</taxon>
        <taxon>Chlorobiota</taxon>
        <taxon>Chlorobiia</taxon>
        <taxon>Chlorobiales</taxon>
        <taxon>Chlorobiaceae</taxon>
        <taxon>Chlorobium/Pelodictyon group</taxon>
        <taxon>Pelodictyon</taxon>
    </lineage>
</organism>
<reference key="1">
    <citation type="submission" date="2005-08" db="EMBL/GenBank/DDBJ databases">
        <title>Complete sequence of Pelodictyon luteolum DSM 273.</title>
        <authorList>
            <consortium name="US DOE Joint Genome Institute"/>
            <person name="Copeland A."/>
            <person name="Lucas S."/>
            <person name="Lapidus A."/>
            <person name="Barry K."/>
            <person name="Detter J.C."/>
            <person name="Glavina T."/>
            <person name="Hammon N."/>
            <person name="Israni S."/>
            <person name="Pitluck S."/>
            <person name="Bryant D."/>
            <person name="Schmutz J."/>
            <person name="Larimer F."/>
            <person name="Land M."/>
            <person name="Kyrpides N."/>
            <person name="Ivanova N."/>
            <person name="Richardson P."/>
        </authorList>
    </citation>
    <scope>NUCLEOTIDE SEQUENCE [LARGE SCALE GENOMIC DNA]</scope>
    <source>
        <strain>DSM 273 / BCRC 81028 / 2530</strain>
    </source>
</reference>
<dbReference type="EMBL" id="CP000096">
    <property type="protein sequence ID" value="ABB24208.1"/>
    <property type="molecule type" value="Genomic_DNA"/>
</dbReference>
<dbReference type="RefSeq" id="WP_011358080.1">
    <property type="nucleotide sequence ID" value="NC_007512.1"/>
</dbReference>
<dbReference type="SMR" id="Q3B373"/>
<dbReference type="STRING" id="319225.Plut_1349"/>
<dbReference type="KEGG" id="plt:Plut_1349"/>
<dbReference type="eggNOG" id="COG0267">
    <property type="taxonomic scope" value="Bacteria"/>
</dbReference>
<dbReference type="HOGENOM" id="CLU_190949_3_0_10"/>
<dbReference type="OrthoDB" id="9801333at2"/>
<dbReference type="Proteomes" id="UP000002709">
    <property type="component" value="Chromosome"/>
</dbReference>
<dbReference type="GO" id="GO:0005737">
    <property type="term" value="C:cytoplasm"/>
    <property type="evidence" value="ECO:0007669"/>
    <property type="project" value="UniProtKB-ARBA"/>
</dbReference>
<dbReference type="GO" id="GO:1990904">
    <property type="term" value="C:ribonucleoprotein complex"/>
    <property type="evidence" value="ECO:0007669"/>
    <property type="project" value="UniProtKB-KW"/>
</dbReference>
<dbReference type="GO" id="GO:0005840">
    <property type="term" value="C:ribosome"/>
    <property type="evidence" value="ECO:0007669"/>
    <property type="project" value="UniProtKB-KW"/>
</dbReference>
<dbReference type="GO" id="GO:0003735">
    <property type="term" value="F:structural constituent of ribosome"/>
    <property type="evidence" value="ECO:0007669"/>
    <property type="project" value="InterPro"/>
</dbReference>
<dbReference type="GO" id="GO:0006412">
    <property type="term" value="P:translation"/>
    <property type="evidence" value="ECO:0007669"/>
    <property type="project" value="UniProtKB-UniRule"/>
</dbReference>
<dbReference type="Gene3D" id="2.20.28.120">
    <property type="entry name" value="Ribosomal protein L33"/>
    <property type="match status" value="1"/>
</dbReference>
<dbReference type="HAMAP" id="MF_00294">
    <property type="entry name" value="Ribosomal_bL33"/>
    <property type="match status" value="1"/>
</dbReference>
<dbReference type="InterPro" id="IPR001705">
    <property type="entry name" value="Ribosomal_bL33"/>
</dbReference>
<dbReference type="InterPro" id="IPR038584">
    <property type="entry name" value="Ribosomal_bL33_sf"/>
</dbReference>
<dbReference type="InterPro" id="IPR011332">
    <property type="entry name" value="Ribosomal_zn-bd"/>
</dbReference>
<dbReference type="NCBIfam" id="NF001764">
    <property type="entry name" value="PRK00504.1"/>
    <property type="match status" value="1"/>
</dbReference>
<dbReference type="NCBIfam" id="NF001860">
    <property type="entry name" value="PRK00595.1"/>
    <property type="match status" value="1"/>
</dbReference>
<dbReference type="NCBIfam" id="TIGR01023">
    <property type="entry name" value="rpmG_bact"/>
    <property type="match status" value="1"/>
</dbReference>
<dbReference type="PANTHER" id="PTHR43168">
    <property type="entry name" value="50S RIBOSOMAL PROTEIN L33, CHLOROPLASTIC"/>
    <property type="match status" value="1"/>
</dbReference>
<dbReference type="PANTHER" id="PTHR43168:SF2">
    <property type="entry name" value="LARGE RIBOSOMAL SUBUNIT PROTEIN BL33C"/>
    <property type="match status" value="1"/>
</dbReference>
<dbReference type="Pfam" id="PF00471">
    <property type="entry name" value="Ribosomal_L33"/>
    <property type="match status" value="1"/>
</dbReference>
<dbReference type="SUPFAM" id="SSF57829">
    <property type="entry name" value="Zn-binding ribosomal proteins"/>
    <property type="match status" value="1"/>
</dbReference>
<feature type="chain" id="PRO_1000004177" description="Large ribosomal subunit protein bL33">
    <location>
        <begin position="1"/>
        <end position="60"/>
    </location>
</feature>
<protein>
    <recommendedName>
        <fullName evidence="1">Large ribosomal subunit protein bL33</fullName>
    </recommendedName>
    <alternativeName>
        <fullName evidence="2">50S ribosomal protein L33</fullName>
    </alternativeName>
</protein>